<name>RCSC_ECOLI</name>
<proteinExistence type="evidence at protein level"/>
<dbReference type="EC" id="2.7.13.3" evidence="2"/>
<dbReference type="EMBL" id="M28242">
    <property type="protein sequence ID" value="AAA24503.1"/>
    <property type="status" value="ALT_INIT"/>
    <property type="molecule type" value="Genomic_DNA"/>
</dbReference>
<dbReference type="EMBL" id="U00096">
    <property type="protein sequence ID" value="AAC75278.2"/>
    <property type="molecule type" value="Genomic_DNA"/>
</dbReference>
<dbReference type="EMBL" id="AP009048">
    <property type="protein sequence ID" value="BAA16001.2"/>
    <property type="status" value="ALT_FRAME"/>
    <property type="molecule type" value="Genomic_DNA"/>
</dbReference>
<dbReference type="EMBL" id="AP009048">
    <property type="protein sequence ID" value="BAA16014.1"/>
    <property type="status" value="ALT_SEQ"/>
    <property type="molecule type" value="Genomic_DNA"/>
</dbReference>
<dbReference type="PIR" id="H64991">
    <property type="entry name" value="BVECCC"/>
</dbReference>
<dbReference type="RefSeq" id="NP_416722.2">
    <property type="nucleotide sequence ID" value="NC_000913.3"/>
</dbReference>
<dbReference type="RefSeq" id="WP_000876011.1">
    <property type="nucleotide sequence ID" value="NZ_SSZK01000030.1"/>
</dbReference>
<dbReference type="PDB" id="2AYX">
    <property type="method" value="NMR"/>
    <property type="chains" value="A=700-949"/>
</dbReference>
<dbReference type="PDB" id="2AYY">
    <property type="method" value="NMR"/>
    <property type="chains" value="A=700-816"/>
</dbReference>
<dbReference type="PDB" id="2AYZ">
    <property type="method" value="NMR"/>
    <property type="chains" value="A=817-949"/>
</dbReference>
<dbReference type="PDBsum" id="2AYX"/>
<dbReference type="PDBsum" id="2AYY"/>
<dbReference type="PDBsum" id="2AYZ"/>
<dbReference type="BMRB" id="P0DMC5"/>
<dbReference type="SMR" id="P0DMC5"/>
<dbReference type="FunCoup" id="P0DMC5">
    <property type="interactions" value="317"/>
</dbReference>
<dbReference type="IntAct" id="P0DMC5">
    <property type="interactions" value="1"/>
</dbReference>
<dbReference type="STRING" id="511145.b2218"/>
<dbReference type="iPTMnet" id="P0DMC5"/>
<dbReference type="jPOST" id="P0DMC5"/>
<dbReference type="PaxDb" id="511145-b2218"/>
<dbReference type="EnsemblBacteria" id="AAC75278">
    <property type="protein sequence ID" value="AAC75278"/>
    <property type="gene ID" value="b2218"/>
</dbReference>
<dbReference type="GeneID" id="948993"/>
<dbReference type="KEGG" id="ecj:JW5917"/>
<dbReference type="KEGG" id="ecj:JW5920"/>
<dbReference type="KEGG" id="eco:b2218"/>
<dbReference type="KEGG" id="ecoc:C3026_12400"/>
<dbReference type="PATRIC" id="fig|511145.12.peg.2307"/>
<dbReference type="EchoBASE" id="EB0815"/>
<dbReference type="eggNOG" id="COG0784">
    <property type="taxonomic scope" value="Bacteria"/>
</dbReference>
<dbReference type="eggNOG" id="COG2205">
    <property type="taxonomic scope" value="Bacteria"/>
</dbReference>
<dbReference type="HOGENOM" id="CLU_000445_69_12_6"/>
<dbReference type="InParanoid" id="P0DMC5"/>
<dbReference type="OMA" id="GLRDMPI"/>
<dbReference type="OrthoDB" id="9770795at2"/>
<dbReference type="PhylomeDB" id="P0DMC5"/>
<dbReference type="BioCyc" id="EcoCyc:RCSC-MONOMER"/>
<dbReference type="BioCyc" id="MetaCyc:RCSC-MONOMER"/>
<dbReference type="BRENDA" id="2.7.13.3">
    <property type="organism ID" value="2026"/>
</dbReference>
<dbReference type="EvolutionaryTrace" id="P0DMC5"/>
<dbReference type="PRO" id="PR:P0DMC5"/>
<dbReference type="Proteomes" id="UP000000625">
    <property type="component" value="Chromosome"/>
</dbReference>
<dbReference type="GO" id="GO:0005829">
    <property type="term" value="C:cytosol"/>
    <property type="evidence" value="ECO:0000314"/>
    <property type="project" value="EcoCyc"/>
</dbReference>
<dbReference type="GO" id="GO:0030288">
    <property type="term" value="C:outer membrane-bounded periplasmic space"/>
    <property type="evidence" value="ECO:0000314"/>
    <property type="project" value="EcoCyc"/>
</dbReference>
<dbReference type="GO" id="GO:0005886">
    <property type="term" value="C:plasma membrane"/>
    <property type="evidence" value="ECO:0000314"/>
    <property type="project" value="EcoCyc"/>
</dbReference>
<dbReference type="GO" id="GO:0005524">
    <property type="term" value="F:ATP binding"/>
    <property type="evidence" value="ECO:0007669"/>
    <property type="project" value="UniProtKB-UniRule"/>
</dbReference>
<dbReference type="GO" id="GO:0004721">
    <property type="term" value="F:phosphoprotein phosphatase activity"/>
    <property type="evidence" value="ECO:0000255"/>
    <property type="project" value="EcoCyc"/>
</dbReference>
<dbReference type="GO" id="GO:0000155">
    <property type="term" value="F:phosphorelay sensor kinase activity"/>
    <property type="evidence" value="ECO:0007669"/>
    <property type="project" value="UniProtKB-UniRule"/>
</dbReference>
<dbReference type="GO" id="GO:0004673">
    <property type="term" value="F:protein histidine kinase activity"/>
    <property type="evidence" value="ECO:0000314"/>
    <property type="project" value="EcoCyc"/>
</dbReference>
<dbReference type="GO" id="GO:0071470">
    <property type="term" value="P:cellular response to osmotic stress"/>
    <property type="evidence" value="ECO:0000315"/>
    <property type="project" value="EcoCyc"/>
</dbReference>
<dbReference type="GO" id="GO:0000160">
    <property type="term" value="P:phosphorelay signal transduction system"/>
    <property type="evidence" value="ECO:0000314"/>
    <property type="project" value="EcoCyc"/>
</dbReference>
<dbReference type="GO" id="GO:0006355">
    <property type="term" value="P:regulation of DNA-templated transcription"/>
    <property type="evidence" value="ECO:0007669"/>
    <property type="project" value="InterPro"/>
</dbReference>
<dbReference type="GO" id="GO:0044010">
    <property type="term" value="P:single-species biofilm formation"/>
    <property type="evidence" value="ECO:0000315"/>
    <property type="project" value="EcoCyc"/>
</dbReference>
<dbReference type="CDD" id="cd16922">
    <property type="entry name" value="HATPase_EvgS-ArcB-TorS-like"/>
    <property type="match status" value="1"/>
</dbReference>
<dbReference type="CDD" id="cd00082">
    <property type="entry name" value="HisKA"/>
    <property type="match status" value="1"/>
</dbReference>
<dbReference type="CDD" id="cd17546">
    <property type="entry name" value="REC_hyHK_CKI1_RcsC-like"/>
    <property type="match status" value="1"/>
</dbReference>
<dbReference type="FunFam" id="1.10.287.130:FF:000019">
    <property type="entry name" value="Sensor histidine kinase RcsC"/>
    <property type="match status" value="1"/>
</dbReference>
<dbReference type="FunFam" id="3.30.565.10:FF:000010">
    <property type="entry name" value="Sensor histidine kinase RcsC"/>
    <property type="match status" value="1"/>
</dbReference>
<dbReference type="FunFam" id="3.40.50.10970:FF:000001">
    <property type="entry name" value="Sensor histidine kinase RcsC"/>
    <property type="match status" value="1"/>
</dbReference>
<dbReference type="FunFam" id="3.40.50.2300:FF:000121">
    <property type="entry name" value="Sensor histidine kinase RcsC"/>
    <property type="match status" value="1"/>
</dbReference>
<dbReference type="Gene3D" id="1.10.287.130">
    <property type="match status" value="1"/>
</dbReference>
<dbReference type="Gene3D" id="3.40.50.10970">
    <property type="match status" value="1"/>
</dbReference>
<dbReference type="Gene3D" id="3.40.50.2300">
    <property type="match status" value="1"/>
</dbReference>
<dbReference type="Gene3D" id="3.30.565.10">
    <property type="entry name" value="Histidine kinase-like ATPase, C-terminal domain"/>
    <property type="match status" value="1"/>
</dbReference>
<dbReference type="HAMAP" id="MF_00979">
    <property type="entry name" value="RcsC"/>
    <property type="match status" value="1"/>
</dbReference>
<dbReference type="InterPro" id="IPR011006">
    <property type="entry name" value="CheY-like_superfamily"/>
</dbReference>
<dbReference type="InterPro" id="IPR036890">
    <property type="entry name" value="HATPase_C_sf"/>
</dbReference>
<dbReference type="InterPro" id="IPR005467">
    <property type="entry name" value="His_kinase_dom"/>
</dbReference>
<dbReference type="InterPro" id="IPR003661">
    <property type="entry name" value="HisK_dim/P_dom"/>
</dbReference>
<dbReference type="InterPro" id="IPR036097">
    <property type="entry name" value="HisK_dim/P_sf"/>
</dbReference>
<dbReference type="InterPro" id="IPR030856">
    <property type="entry name" value="RcsC"/>
</dbReference>
<dbReference type="InterPro" id="IPR038388">
    <property type="entry name" value="RcsC_C_sf"/>
</dbReference>
<dbReference type="InterPro" id="IPR004358">
    <property type="entry name" value="Sig_transdc_His_kin-like_C"/>
</dbReference>
<dbReference type="InterPro" id="IPR019017">
    <property type="entry name" value="Sig_transdc_His_kin_a/b-loop_C"/>
</dbReference>
<dbReference type="InterPro" id="IPR001789">
    <property type="entry name" value="Sig_transdc_resp-reg_receiver"/>
</dbReference>
<dbReference type="NCBIfam" id="NF008099">
    <property type="entry name" value="PRK10841.1"/>
    <property type="match status" value="1"/>
</dbReference>
<dbReference type="PANTHER" id="PTHR45339">
    <property type="entry name" value="HYBRID SIGNAL TRANSDUCTION HISTIDINE KINASE J"/>
    <property type="match status" value="1"/>
</dbReference>
<dbReference type="PANTHER" id="PTHR45339:SF1">
    <property type="entry name" value="HYBRID SIGNAL TRANSDUCTION HISTIDINE KINASE J"/>
    <property type="match status" value="1"/>
</dbReference>
<dbReference type="Pfam" id="PF02518">
    <property type="entry name" value="HATPase_c"/>
    <property type="match status" value="1"/>
</dbReference>
<dbReference type="Pfam" id="PF00512">
    <property type="entry name" value="HisKA"/>
    <property type="match status" value="1"/>
</dbReference>
<dbReference type="Pfam" id="PF09456">
    <property type="entry name" value="RcsC"/>
    <property type="match status" value="1"/>
</dbReference>
<dbReference type="Pfam" id="PF00072">
    <property type="entry name" value="Response_reg"/>
    <property type="match status" value="1"/>
</dbReference>
<dbReference type="PRINTS" id="PR00344">
    <property type="entry name" value="BCTRLSENSOR"/>
</dbReference>
<dbReference type="SMART" id="SM00387">
    <property type="entry name" value="HATPase_c"/>
    <property type="match status" value="1"/>
</dbReference>
<dbReference type="SMART" id="SM00388">
    <property type="entry name" value="HisKA"/>
    <property type="match status" value="1"/>
</dbReference>
<dbReference type="SMART" id="SM00448">
    <property type="entry name" value="REC"/>
    <property type="match status" value="1"/>
</dbReference>
<dbReference type="SUPFAM" id="SSF55874">
    <property type="entry name" value="ATPase domain of HSP90 chaperone/DNA topoisomerase II/histidine kinase"/>
    <property type="match status" value="1"/>
</dbReference>
<dbReference type="SUPFAM" id="SSF52172">
    <property type="entry name" value="CheY-like"/>
    <property type="match status" value="2"/>
</dbReference>
<dbReference type="SUPFAM" id="SSF47384">
    <property type="entry name" value="Homodimeric domain of signal transducing histidine kinase"/>
    <property type="match status" value="1"/>
</dbReference>
<dbReference type="PROSITE" id="PS51426">
    <property type="entry name" value="ABL"/>
    <property type="match status" value="1"/>
</dbReference>
<dbReference type="PROSITE" id="PS50109">
    <property type="entry name" value="HIS_KIN"/>
    <property type="match status" value="1"/>
</dbReference>
<dbReference type="PROSITE" id="PS50110">
    <property type="entry name" value="RESPONSE_REGULATORY"/>
    <property type="match status" value="1"/>
</dbReference>
<gene>
    <name evidence="2" type="primary">rcsC</name>
    <name type="ordered locus">b2218</name>
    <name type="ordered locus">JW5917/JW5920</name>
</gene>
<organism>
    <name type="scientific">Escherichia coli (strain K12)</name>
    <dbReference type="NCBI Taxonomy" id="83333"/>
    <lineage>
        <taxon>Bacteria</taxon>
        <taxon>Pseudomonadati</taxon>
        <taxon>Pseudomonadota</taxon>
        <taxon>Gammaproteobacteria</taxon>
        <taxon>Enterobacterales</taxon>
        <taxon>Enterobacteriaceae</taxon>
        <taxon>Escherichia</taxon>
    </lineage>
</organism>
<protein>
    <recommendedName>
        <fullName evidence="2">Sensor histidine kinase RcsC</fullName>
        <ecNumber evidence="2">2.7.13.3</ecNumber>
    </recommendedName>
    <alternativeName>
        <fullName>Capsular synthesis regulator component C</fullName>
    </alternativeName>
</protein>
<comment type="function">
    <text evidence="2 4 5 6 7 8 9">Component of the Rcs signaling system, which controls transcription of numerous genes. RcsC functions as a membrane-associated protein kinase that phosphorylates RcsD in response to environmental signals. The phosphoryl group is then transferred to the response regulator RcsB. RcsC also has phosphatase activity. The system controls expression of genes involved in colanic acid capsule synthesis, biofilm formation and cell division.</text>
</comment>
<comment type="catalytic activity">
    <reaction evidence="2">
        <text>ATP + protein L-histidine = ADP + protein N-phospho-L-histidine.</text>
        <dbReference type="EC" id="2.7.13.3"/>
    </reaction>
</comment>
<comment type="activity regulation">
    <text evidence="6 12 14">The Rcs phosphorelay may be activated by RcsF. DjlA, LolA and OmpG might act as a regulator of the phosphorelay. Activity is probably up-regulated by YmgA/AriR, and possibly down-regulated by YcgZ, all 3 are connector proteins providing additional signal input into signaling system.</text>
</comment>
<comment type="subunit">
    <text evidence="2 10 13">Interacts with RcsD.</text>
</comment>
<comment type="subcellular location">
    <subcellularLocation>
        <location evidence="2 11 15">Cell inner membrane</location>
        <topology evidence="2 11 15">Multi-pass membrane protein</topology>
    </subcellularLocation>
</comment>
<comment type="PTM">
    <text>Autophosphorylated. Activation probably requires a transfer of a phosphate group from a His in the transmitter domain to an Asp in the receiver domain.</text>
</comment>
<comment type="miscellaneous">
    <text evidence="17">There is a close linkage between the Rcs and PhoQ/P signaling systems, and both signaling systems respond to certain external divalent cations (zinc and magnesium).</text>
</comment>
<comment type="similarity">
    <text evidence="2">Belongs to the RcsC family.</text>
</comment>
<comment type="sequence caution" evidence="16">
    <conflict type="erroneous initiation">
        <sequence resource="EMBL-CDS" id="AAA24503"/>
    </conflict>
    <text>Truncated N-terminus.</text>
</comment>
<comment type="sequence caution" evidence="16">
    <conflict type="frameshift">
        <sequence resource="EMBL-CDS" id="BAA16001"/>
    </conflict>
</comment>
<comment type="sequence caution" evidence="16">
    <conflict type="erroneous initiation">
        <sequence resource="EMBL-CDS" id="BAA16014"/>
    </conflict>
    <text>Truncated N-terminus.</text>
</comment>
<comment type="sequence caution" evidence="16">
    <conflict type="frameshift">
        <sequence resource="EMBL-CDS" id="BAA16014"/>
    </conflict>
</comment>
<evidence type="ECO:0000255" key="1"/>
<evidence type="ECO:0000255" key="2">
    <source>
        <dbReference type="HAMAP-Rule" id="MF_00979"/>
    </source>
</evidence>
<evidence type="ECO:0000255" key="3">
    <source>
        <dbReference type="PROSITE-ProRule" id="PRU00169"/>
    </source>
</evidence>
<evidence type="ECO:0000269" key="4">
    <source>
    </source>
</evidence>
<evidence type="ECO:0000269" key="5">
    <source>
    </source>
</evidence>
<evidence type="ECO:0000269" key="6">
    <source>
    </source>
</evidence>
<evidence type="ECO:0000269" key="7">
    <source>
    </source>
</evidence>
<evidence type="ECO:0000269" key="8">
    <source>
    </source>
</evidence>
<evidence type="ECO:0000269" key="9">
    <source>
    </source>
</evidence>
<evidence type="ECO:0000269" key="10">
    <source>
    </source>
</evidence>
<evidence type="ECO:0000269" key="11">
    <source>
    </source>
</evidence>
<evidence type="ECO:0000269" key="12">
    <source>
    </source>
</evidence>
<evidence type="ECO:0000269" key="13">
    <source>
    </source>
</evidence>
<evidence type="ECO:0000269" key="14">
    <source>
    </source>
</evidence>
<evidence type="ECO:0000269" key="15">
    <source>
    </source>
</evidence>
<evidence type="ECO:0000305" key="16"/>
<evidence type="ECO:0000305" key="17">
    <source>
    </source>
</evidence>
<evidence type="ECO:0007829" key="18">
    <source>
        <dbReference type="PDB" id="2AYX"/>
    </source>
</evidence>
<evidence type="ECO:0007829" key="19">
    <source>
        <dbReference type="PDB" id="2AYY"/>
    </source>
</evidence>
<reference key="1">
    <citation type="journal article" date="1990" name="J. Bacteriol.">
        <title>RcsB and RcsC: a two-component regulator of capsule synthesis in Escherichia coli.</title>
        <authorList>
            <person name="Stout V."/>
            <person name="Gottesman S."/>
        </authorList>
    </citation>
    <scope>NUCLEOTIDE SEQUENCE [GENOMIC DNA]</scope>
    <scope>SUBCELLULAR LOCATION</scope>
    <scope>TOPOLOGY</scope>
    <source>
        <strain>K12</strain>
    </source>
</reference>
<reference key="2">
    <citation type="journal article" date="1996" name="DNA Res.">
        <title>A 460-kb DNA sequence of the Escherichia coli K-12 genome corresponding to the 40.1-50.0 min region on the linkage map.</title>
        <authorList>
            <person name="Itoh T."/>
            <person name="Aiba H."/>
            <person name="Baba T."/>
            <person name="Fujita K."/>
            <person name="Hayashi K."/>
            <person name="Inada T."/>
            <person name="Isono K."/>
            <person name="Kasai H."/>
            <person name="Kimura S."/>
            <person name="Kitakawa M."/>
            <person name="Kitagawa M."/>
            <person name="Makino K."/>
            <person name="Miki T."/>
            <person name="Mizobuchi K."/>
            <person name="Mori H."/>
            <person name="Mori T."/>
            <person name="Motomura K."/>
            <person name="Nakade S."/>
            <person name="Nakamura Y."/>
            <person name="Nashimoto H."/>
            <person name="Nishio Y."/>
            <person name="Oshima T."/>
            <person name="Saito N."/>
            <person name="Sampei G."/>
            <person name="Seki Y."/>
            <person name="Sivasundaram S."/>
            <person name="Tagami H."/>
            <person name="Takeda J."/>
            <person name="Takemoto K."/>
            <person name="Wada C."/>
            <person name="Yamamoto Y."/>
            <person name="Horiuchi T."/>
        </authorList>
    </citation>
    <scope>NUCLEOTIDE SEQUENCE [LARGE SCALE GENOMIC DNA]</scope>
    <source>
        <strain>K12 / W3110 / ATCC 27325 / DSM 5911</strain>
    </source>
</reference>
<reference key="3">
    <citation type="journal article" date="1997" name="Science">
        <title>The complete genome sequence of Escherichia coli K-12.</title>
        <authorList>
            <person name="Blattner F.R."/>
            <person name="Plunkett G. III"/>
            <person name="Bloch C.A."/>
            <person name="Perna N.T."/>
            <person name="Burland V."/>
            <person name="Riley M."/>
            <person name="Collado-Vides J."/>
            <person name="Glasner J.D."/>
            <person name="Rode C.K."/>
            <person name="Mayhew G.F."/>
            <person name="Gregor J."/>
            <person name="Davis N.W."/>
            <person name="Kirkpatrick H.A."/>
            <person name="Goeden M.A."/>
            <person name="Rose D.J."/>
            <person name="Mau B."/>
            <person name="Shao Y."/>
        </authorList>
    </citation>
    <scope>NUCLEOTIDE SEQUENCE [LARGE SCALE GENOMIC DNA]</scope>
    <source>
        <strain>K12 / MG1655 / ATCC 47076</strain>
    </source>
</reference>
<reference key="4">
    <citation type="journal article" date="2006" name="Mol. Syst. Biol.">
        <title>Highly accurate genome sequences of Escherichia coli K-12 strains MG1655 and W3110.</title>
        <authorList>
            <person name="Hayashi K."/>
            <person name="Morooka N."/>
            <person name="Yamamoto Y."/>
            <person name="Fujita K."/>
            <person name="Isono K."/>
            <person name="Choi S."/>
            <person name="Ohtsubo E."/>
            <person name="Baba T."/>
            <person name="Wanner B.L."/>
            <person name="Mori H."/>
            <person name="Horiuchi T."/>
        </authorList>
    </citation>
    <scope>NUCLEOTIDE SEQUENCE [LARGE SCALE GENOMIC DNA]</scope>
    <source>
        <strain>K12 / W3110 / ATCC 27325 / DSM 5911</strain>
    </source>
</reference>
<reference key="5">
    <citation type="journal article" date="1999" name="Mol. Microbiol.">
        <title>Regulation of Escherichia coli cell division genes ftsA and ftsZ by the two-component system rcsC-rcsB.</title>
        <authorList>
            <person name="Carballes F."/>
            <person name="Bertrand C."/>
            <person name="Bouche J.P."/>
            <person name="Cam K."/>
        </authorList>
    </citation>
    <scope>FUNCTION</scope>
</reference>
<reference key="6">
    <citation type="journal article" date="2001" name="Biosci. Biotechnol. Biochem.">
        <title>Characterization of the RcsC-&gt;YojN-&gt;RcsB phosphorelay signaling pathway involved in capsular synthesis in Escherichia coli.</title>
        <authorList>
            <person name="Chen M.H."/>
            <person name="Takeda S."/>
            <person name="Yamada H."/>
            <person name="Ishii Y."/>
            <person name="Yamashino T."/>
            <person name="Mizuno T."/>
        </authorList>
    </citation>
    <scope>FUNCTION</scope>
    <scope>ACTIVITY REGULATION</scope>
    <scope>PHOSPHORELAY</scope>
</reference>
<reference key="7">
    <citation type="journal article" date="2001" name="Mol. Microbiol.">
        <title>A novel feature of the multistep phosphorelay in Escherichia coli: a revised model of the RcsC-&gt;YojN-&gt;RcsB signalling pathway implicated in capsular synthesis and swarming behaviour.</title>
        <authorList>
            <person name="Takeda S.-H."/>
            <person name="Fujisawa Y."/>
            <person name="Matsubara M."/>
            <person name="Aiba H."/>
            <person name="Mizuno T."/>
        </authorList>
    </citation>
    <scope>FUNCTION</scope>
    <scope>AUTOPHOSPHORYLATION</scope>
    <scope>PHOSPHORELAY</scope>
    <source>
        <strain>K12</strain>
    </source>
</reference>
<reference key="8">
    <citation type="journal article" date="2002" name="J. Bacteriol.">
        <title>Genetic analysis of the RcsC sensor kinase from Escherichia coli K-12.</title>
        <authorList>
            <person name="Clarke D.J."/>
            <person name="Joyce S.A."/>
            <person name="Toutain C.M."/>
            <person name="Jacq A."/>
            <person name="Holland I.B."/>
        </authorList>
    </citation>
    <scope>FUNCTION AS A KINASE AND A PHOSPHATASE</scope>
    <scope>MUTAGENESIS OF HIS-479 AND ASP-875</scope>
</reference>
<reference key="9">
    <citation type="journal article" date="2003" name="J. Bacteriol.">
        <title>Genome-wide analyses revealing a signaling network of the RcsC-YojN-RcsB phosphorelay system in Escherichia coli.</title>
        <authorList>
            <person name="Hagiwara D."/>
            <person name="Sugiura M."/>
            <person name="Oshima T."/>
            <person name="Mori H."/>
            <person name="Aiba H."/>
            <person name="Yamashino T."/>
            <person name="Mizuno T."/>
        </authorList>
    </citation>
    <scope>FUNCTION</scope>
    <source>
        <strain>K12 / ST001</strain>
    </source>
</reference>
<reference key="10">
    <citation type="journal article" date="2003" name="Mol. Microbiol.">
        <title>The RcsC sensor kinase is required for normal biofilm formation in Escherichia coli K-12 and controls the expression of a regulon in response to growth on a solid surface.</title>
        <authorList>
            <person name="Ferrieres L."/>
            <person name="Clarke D.J."/>
        </authorList>
    </citation>
    <scope>FUNCTION</scope>
    <source>
        <strain>K12</strain>
    </source>
</reference>
<reference key="11">
    <citation type="journal article" date="2004" name="J. Mol. Biol.">
        <title>Solution structure of the Escherichia coli YojN histidine-phosphotransferase domain and its interaction with cognate phosphoryl receiver domains.</title>
        <authorList>
            <person name="Rogov V.V."/>
            <person name="Bernhard F."/>
            <person name="Loehr F."/>
            <person name="Doetsch V."/>
        </authorList>
    </citation>
    <scope>INTERACTION WITH RCSD</scope>
</reference>
<reference key="12">
    <citation type="journal article" date="2005" name="J. Bacteriol.">
        <title>Role of RcsF in signaling to the Rcs phosphorelay pathway in Escherichia coli.</title>
        <authorList>
            <person name="Majdalani N."/>
            <person name="Heck M."/>
            <person name="Stout V."/>
            <person name="Gottesman S."/>
        </authorList>
    </citation>
    <scope>ACTIVITY REGULATION</scope>
    <scope>PHOSPHORELAY</scope>
    <source>
        <strain>K12 / MG1655 / ATCC 47076</strain>
    </source>
</reference>
<reference key="13">
    <citation type="journal article" date="2005" name="Science">
        <title>Global topology analysis of the Escherichia coli inner membrane proteome.</title>
        <authorList>
            <person name="Daley D.O."/>
            <person name="Rapp M."/>
            <person name="Granseth E."/>
            <person name="Melen K."/>
            <person name="Drew D."/>
            <person name="von Heijne G."/>
        </authorList>
    </citation>
    <scope>SUBCELLULAR LOCATION</scope>
    <source>
        <strain>K12 / MG1655 / ATCC 47076</strain>
    </source>
</reference>
<reference key="14">
    <citation type="journal article" date="2009" name="Genes Dev.">
        <title>The BLUF-EAL protein YcgF acts as a direct anti-repressor in a blue-light response of Escherichia coli.</title>
        <authorList>
            <person name="Tschowri N."/>
            <person name="Busse S."/>
            <person name="Hengge R."/>
        </authorList>
    </citation>
    <scope>ACTIVITY REGULATION</scope>
    <source>
        <strain>K12 / MC4100</strain>
    </source>
</reference>
<reference key="15">
    <citation type="journal article" date="2006" name="J. Mol. Biol.">
        <title>A new structural domain in the Escherichia coli RcsC hybrid sensor kinase connects histidine kinase and phosphoreceiver domains.</title>
        <authorList>
            <person name="Rogov V.V."/>
            <person name="Rogova N.Y."/>
            <person name="Bernhard F."/>
            <person name="Koglin A."/>
            <person name="Lohr F."/>
            <person name="Dotsch V."/>
        </authorList>
    </citation>
    <scope>STRUCTURE BY NMR OF 700-949</scope>
    <scope>INTERACTION WITH RCSD</scope>
</reference>
<feature type="chain" id="PRO_0000074856" description="Sensor histidine kinase RcsC">
    <location>
        <begin position="1"/>
        <end position="949"/>
    </location>
</feature>
<feature type="topological domain" description="Cytoplasmic" evidence="1">
    <location>
        <begin position="1"/>
        <end position="19"/>
    </location>
</feature>
<feature type="transmembrane region" description="Helical" evidence="2">
    <location>
        <begin position="20"/>
        <end position="41"/>
    </location>
</feature>
<feature type="topological domain" description="Periplasmic" evidence="1">
    <location>
        <begin position="42"/>
        <end position="313"/>
    </location>
</feature>
<feature type="transmembrane region" description="Helical" evidence="2">
    <location>
        <begin position="314"/>
        <end position="335"/>
    </location>
</feature>
<feature type="topological domain" description="Cytoplasmic" evidence="1">
    <location>
        <begin position="336"/>
        <end position="949"/>
    </location>
</feature>
<feature type="domain" description="PAS" evidence="2">
    <location>
        <begin position="357"/>
        <end position="425"/>
    </location>
</feature>
<feature type="domain" description="Histidine kinase" evidence="2">
    <location>
        <begin position="476"/>
        <end position="692"/>
    </location>
</feature>
<feature type="domain" description="ABL" evidence="2">
    <location>
        <begin position="705"/>
        <end position="805"/>
    </location>
</feature>
<feature type="domain" description="Response regulatory" evidence="3">
    <location>
        <begin position="826"/>
        <end position="940"/>
    </location>
</feature>
<feature type="modified residue" description="Phosphohistidine; by autocatalysis" evidence="16">
    <location>
        <position position="479"/>
    </location>
</feature>
<feature type="modified residue" description="4-aspartylphosphate" evidence="16">
    <location>
        <position position="875"/>
    </location>
</feature>
<feature type="mutagenesis site" description="Does not induce cps operon expression. Retains phosphatase activity." evidence="7">
    <original>H</original>
    <variation>Q</variation>
    <location>
        <position position="479"/>
    </location>
</feature>
<feature type="mutagenesis site" description="Does not induce cps operon expression. Lack of phosphatase activity." evidence="7">
    <original>D</original>
    <variation>Q</variation>
    <location>
        <position position="875"/>
    </location>
</feature>
<feature type="sequence conflict" description="In Ref. 1; AAA24503." evidence="16" ref="1">
    <original>MR</original>
    <variation>IG</variation>
    <location>
        <begin position="129"/>
        <end position="130"/>
    </location>
</feature>
<feature type="sequence conflict" description="In Ref. 1; AAA24503." evidence="16" ref="1">
    <original>T</original>
    <variation>S</variation>
    <location>
        <position position="935"/>
    </location>
</feature>
<feature type="turn" evidence="18">
    <location>
        <begin position="703"/>
        <end position="706"/>
    </location>
</feature>
<feature type="strand" evidence="18">
    <location>
        <begin position="707"/>
        <end position="712"/>
    </location>
</feature>
<feature type="helix" evidence="18">
    <location>
        <begin position="716"/>
        <end position="726"/>
    </location>
</feature>
<feature type="turn" evidence="18">
    <location>
        <begin position="727"/>
        <end position="730"/>
    </location>
</feature>
<feature type="strand" evidence="18">
    <location>
        <begin position="731"/>
        <end position="735"/>
    </location>
</feature>
<feature type="strand" evidence="18">
    <location>
        <begin position="746"/>
        <end position="752"/>
    </location>
</feature>
<feature type="strand" evidence="18">
    <location>
        <begin position="759"/>
        <end position="765"/>
    </location>
</feature>
<feature type="strand" evidence="19">
    <location>
        <begin position="770"/>
        <end position="772"/>
    </location>
</feature>
<feature type="strand" evidence="18">
    <location>
        <begin position="780"/>
        <end position="783"/>
    </location>
</feature>
<feature type="helix" evidence="18">
    <location>
        <begin position="790"/>
        <end position="799"/>
    </location>
</feature>
<feature type="strand" evidence="18">
    <location>
        <begin position="826"/>
        <end position="833"/>
    </location>
</feature>
<feature type="helix" evidence="18">
    <location>
        <begin position="834"/>
        <end position="847"/>
    </location>
</feature>
<feature type="strand" evidence="18">
    <location>
        <begin position="849"/>
        <end position="854"/>
    </location>
</feature>
<feature type="helix" evidence="18">
    <location>
        <begin position="858"/>
        <end position="866"/>
    </location>
</feature>
<feature type="strand" evidence="18">
    <location>
        <begin position="870"/>
        <end position="878"/>
    </location>
</feature>
<feature type="helix" evidence="18">
    <location>
        <begin position="884"/>
        <end position="894"/>
    </location>
</feature>
<feature type="strand" evidence="18">
    <location>
        <begin position="899"/>
        <end position="908"/>
    </location>
</feature>
<feature type="helix" evidence="18">
    <location>
        <begin position="909"/>
        <end position="916"/>
    </location>
</feature>
<feature type="strand" evidence="18">
    <location>
        <begin position="920"/>
        <end position="926"/>
    </location>
</feature>
<feature type="helix" evidence="18">
    <location>
        <begin position="929"/>
        <end position="947"/>
    </location>
</feature>
<keyword id="KW-0002">3D-structure</keyword>
<keyword id="KW-0067">ATP-binding</keyword>
<keyword id="KW-0972">Capsule biogenesis/degradation</keyword>
<keyword id="KW-0997">Cell inner membrane</keyword>
<keyword id="KW-1003">Cell membrane</keyword>
<keyword id="KW-0418">Kinase</keyword>
<keyword id="KW-0472">Membrane</keyword>
<keyword id="KW-0547">Nucleotide-binding</keyword>
<keyword id="KW-0597">Phosphoprotein</keyword>
<keyword id="KW-1185">Reference proteome</keyword>
<keyword id="KW-0808">Transferase</keyword>
<keyword id="KW-0812">Transmembrane</keyword>
<keyword id="KW-1133">Transmembrane helix</keyword>
<keyword id="KW-0902">Two-component regulatory system</keyword>
<sequence length="949" mass="106506">MKYLASFRTTLKASRYMFRALALVLWLLIAFSSVFYIVNALHQRESEIRQEFNLSSDQAQRFIQRTSDVMKELKYIAENRLSAENGVLSPRGRETQADVPAFEPLFADSDCSAMSNTWRGSLESLAWFMRYWRDNFSAAYDLNRVFLIGSDNLCMANFGLRDMPVERDTALKALHERINKYRNAPQDDSGSNLYWISEGPRPGVGYFYALTPVYLANRLQALLGVEQTIRMENFFLPGTLPMGVTILDENGHTLISLTGPESKIKGDPRWMQERSWFGYTEGFRELVLKKNLPPSSLSIVYSVPVDKVLERIRMLILNAILLNVLAGAALFTLARMYERRIFIPAESDALRLEEHEQFNRKIVASAPVGICILRTADGVNILSNELAHTYLNMLTHEDRQRLTQIICGQQVNFVDVLTSNNTNLQISFVHSRYRNENVAICVLVDVSSRVKMEESLQEMAQAAEQASQSKSMFLATVSHELRTPLYGIIGNLDLLQTKELPKGVDRLVTAMNNSSSLLLKIISDILDFSKIESEQLKIEPREFSPREVMNHITANYLPLVVRKQLGLYCFIEPDVPVALNGDPMRLQQVISNLLSNAIKFTDTGCIVLHVRADGDYLSIRVRDTGVGIPAKEVVRLFDPFFQVGTGVQRNFQGTGLGLAICEKLISMMDGDISVDSEPGMGSQFTVRIPLYGAQYPQKKGVEGLSGKRCWLAVRNASLCQFLETSLQRSGIVVTTYEGQEPTPEDVLITDEVVSKKWQGRAVVTFCRRHIGIPLEKAPGEWVHSVAAPHELPALLARIYLIEMESDDPANALPSTDKAVSDNDDMMILVVDDHPINRRLLADQLGSLGYQCKTANDGVDALNVLSKNHIDIVLSDVNMPNMDGYRLTQRIRQLGLTLPVIGVTANALAEEKQRCLESGMDSCLSKPVTLDVIKQTLTLYAERVRKSRDS</sequence>
<accession>P0DMC5</accession>
<accession>P14376</accession>
<accession>P76457</accession>
<accession>P97170</accession>
<accession>P97202</accession>
<accession>Q47586</accession>